<keyword id="KW-1185">Reference proteome</keyword>
<keyword id="KW-0687">Ribonucleoprotein</keyword>
<keyword id="KW-0689">Ribosomal protein</keyword>
<keyword id="KW-0694">RNA-binding</keyword>
<keyword id="KW-0699">rRNA-binding</keyword>
<proteinExistence type="inferred from homology"/>
<protein>
    <recommendedName>
        <fullName evidence="1">Small ribosomal subunit protein uS17</fullName>
    </recommendedName>
    <alternativeName>
        <fullName evidence="2">30S ribosomal protein S17</fullName>
    </alternativeName>
</protein>
<dbReference type="EMBL" id="CP001016">
    <property type="protein sequence ID" value="ACB95003.1"/>
    <property type="molecule type" value="Genomic_DNA"/>
</dbReference>
<dbReference type="RefSeq" id="WP_012384360.1">
    <property type="nucleotide sequence ID" value="NC_010581.1"/>
</dbReference>
<dbReference type="SMR" id="B2IK71"/>
<dbReference type="STRING" id="395963.Bind_1363"/>
<dbReference type="KEGG" id="bid:Bind_1363"/>
<dbReference type="eggNOG" id="COG0186">
    <property type="taxonomic scope" value="Bacteria"/>
</dbReference>
<dbReference type="HOGENOM" id="CLU_073626_1_1_5"/>
<dbReference type="OrthoDB" id="9811714at2"/>
<dbReference type="Proteomes" id="UP000001695">
    <property type="component" value="Chromosome"/>
</dbReference>
<dbReference type="GO" id="GO:0022627">
    <property type="term" value="C:cytosolic small ribosomal subunit"/>
    <property type="evidence" value="ECO:0007669"/>
    <property type="project" value="TreeGrafter"/>
</dbReference>
<dbReference type="GO" id="GO:0019843">
    <property type="term" value="F:rRNA binding"/>
    <property type="evidence" value="ECO:0007669"/>
    <property type="project" value="UniProtKB-UniRule"/>
</dbReference>
<dbReference type="GO" id="GO:0003735">
    <property type="term" value="F:structural constituent of ribosome"/>
    <property type="evidence" value="ECO:0007669"/>
    <property type="project" value="InterPro"/>
</dbReference>
<dbReference type="GO" id="GO:0006412">
    <property type="term" value="P:translation"/>
    <property type="evidence" value="ECO:0007669"/>
    <property type="project" value="UniProtKB-UniRule"/>
</dbReference>
<dbReference type="CDD" id="cd00364">
    <property type="entry name" value="Ribosomal_uS17"/>
    <property type="match status" value="1"/>
</dbReference>
<dbReference type="Gene3D" id="2.40.50.140">
    <property type="entry name" value="Nucleic acid-binding proteins"/>
    <property type="match status" value="1"/>
</dbReference>
<dbReference type="HAMAP" id="MF_01345_B">
    <property type="entry name" value="Ribosomal_uS17_B"/>
    <property type="match status" value="1"/>
</dbReference>
<dbReference type="InterPro" id="IPR012340">
    <property type="entry name" value="NA-bd_OB-fold"/>
</dbReference>
<dbReference type="InterPro" id="IPR000266">
    <property type="entry name" value="Ribosomal_uS17"/>
</dbReference>
<dbReference type="InterPro" id="IPR019984">
    <property type="entry name" value="Ribosomal_uS17_bact/chlr"/>
</dbReference>
<dbReference type="InterPro" id="IPR019979">
    <property type="entry name" value="Ribosomal_uS17_CS"/>
</dbReference>
<dbReference type="NCBIfam" id="NF004123">
    <property type="entry name" value="PRK05610.1"/>
    <property type="match status" value="1"/>
</dbReference>
<dbReference type="NCBIfam" id="TIGR03635">
    <property type="entry name" value="uS17_bact"/>
    <property type="match status" value="1"/>
</dbReference>
<dbReference type="PANTHER" id="PTHR10744">
    <property type="entry name" value="40S RIBOSOMAL PROTEIN S11 FAMILY MEMBER"/>
    <property type="match status" value="1"/>
</dbReference>
<dbReference type="PANTHER" id="PTHR10744:SF1">
    <property type="entry name" value="SMALL RIBOSOMAL SUBUNIT PROTEIN US17M"/>
    <property type="match status" value="1"/>
</dbReference>
<dbReference type="Pfam" id="PF00366">
    <property type="entry name" value="Ribosomal_S17"/>
    <property type="match status" value="1"/>
</dbReference>
<dbReference type="PRINTS" id="PR00973">
    <property type="entry name" value="RIBOSOMALS17"/>
</dbReference>
<dbReference type="SUPFAM" id="SSF50249">
    <property type="entry name" value="Nucleic acid-binding proteins"/>
    <property type="match status" value="1"/>
</dbReference>
<dbReference type="PROSITE" id="PS00056">
    <property type="entry name" value="RIBOSOMAL_S17"/>
    <property type="match status" value="1"/>
</dbReference>
<comment type="function">
    <text evidence="1">One of the primary rRNA binding proteins, it binds specifically to the 5'-end of 16S ribosomal RNA.</text>
</comment>
<comment type="subunit">
    <text evidence="1">Part of the 30S ribosomal subunit.</text>
</comment>
<comment type="similarity">
    <text evidence="1">Belongs to the universal ribosomal protein uS17 family.</text>
</comment>
<name>RS17_BEII9</name>
<feature type="chain" id="PRO_1000143222" description="Small ribosomal subunit protein uS17">
    <location>
        <begin position="1"/>
        <end position="80"/>
    </location>
</feature>
<organism>
    <name type="scientific">Beijerinckia indica subsp. indica (strain ATCC 9039 / DSM 1715 / NCIMB 8712)</name>
    <dbReference type="NCBI Taxonomy" id="395963"/>
    <lineage>
        <taxon>Bacteria</taxon>
        <taxon>Pseudomonadati</taxon>
        <taxon>Pseudomonadota</taxon>
        <taxon>Alphaproteobacteria</taxon>
        <taxon>Hyphomicrobiales</taxon>
        <taxon>Beijerinckiaceae</taxon>
        <taxon>Beijerinckia</taxon>
    </lineage>
</organism>
<evidence type="ECO:0000255" key="1">
    <source>
        <dbReference type="HAMAP-Rule" id="MF_01345"/>
    </source>
</evidence>
<evidence type="ECO:0000305" key="2"/>
<gene>
    <name evidence="1" type="primary">rpsQ</name>
    <name type="ordered locus">Bind_1363</name>
</gene>
<accession>B2IK71</accession>
<reference key="1">
    <citation type="journal article" date="2010" name="J. Bacteriol.">
        <title>Complete genome sequence of Beijerinckia indica subsp. indica.</title>
        <authorList>
            <person name="Tamas I."/>
            <person name="Dedysh S.N."/>
            <person name="Liesack W."/>
            <person name="Stott M.B."/>
            <person name="Alam M."/>
            <person name="Murrell J.C."/>
            <person name="Dunfield P.F."/>
        </authorList>
    </citation>
    <scope>NUCLEOTIDE SEQUENCE [LARGE SCALE GENOMIC DNA]</scope>
    <source>
        <strain>ATCC 9039 / DSM 1715 / NCIMB 8712</strain>
    </source>
</reference>
<sequence>MPKRILQGVVVSDKQEKTIVVKVERRFTHPLLKKTVRRSKNYHAHDEAGTYKIGDTVSIEETKPISRLKRWIVLETAAKA</sequence>